<accession>Q6NVL7</accession>
<dbReference type="EMBL" id="BC067988">
    <property type="protein sequence ID" value="AAH67988.1"/>
    <property type="molecule type" value="mRNA"/>
</dbReference>
<dbReference type="RefSeq" id="NP_998866.1">
    <property type="nucleotide sequence ID" value="NM_213701.1"/>
</dbReference>
<dbReference type="SMR" id="Q6NVL7"/>
<dbReference type="FunCoup" id="Q6NVL7">
    <property type="interactions" value="1549"/>
</dbReference>
<dbReference type="STRING" id="8364.ENSXETP00000023279"/>
<dbReference type="PaxDb" id="8364-ENSXETP00000016617"/>
<dbReference type="DNASU" id="407966"/>
<dbReference type="GeneID" id="407966"/>
<dbReference type="KEGG" id="xtr:407966"/>
<dbReference type="AGR" id="Xenbase:XB-GENE-948820"/>
<dbReference type="CTD" id="25978"/>
<dbReference type="Xenbase" id="XB-GENE-948820">
    <property type="gene designation" value="chmp2b"/>
</dbReference>
<dbReference type="eggNOG" id="KOG3231">
    <property type="taxonomic scope" value="Eukaryota"/>
</dbReference>
<dbReference type="HOGENOM" id="CLU_069208_1_2_1"/>
<dbReference type="InParanoid" id="Q6NVL7"/>
<dbReference type="OMA" id="EIMRMEM"/>
<dbReference type="OrthoDB" id="5594417at2759"/>
<dbReference type="PhylomeDB" id="Q6NVL7"/>
<dbReference type="TreeFam" id="TF314163"/>
<dbReference type="Reactome" id="R-XTR-1632852">
    <property type="pathway name" value="Macroautophagy"/>
</dbReference>
<dbReference type="Reactome" id="R-XTR-917729">
    <property type="pathway name" value="Endosomal Sorting Complex Required For Transport (ESCRT)"/>
</dbReference>
<dbReference type="Reactome" id="R-XTR-9668328">
    <property type="pathway name" value="Sealing of the nuclear envelope (NE) by ESCRT-III"/>
</dbReference>
<dbReference type="Proteomes" id="UP000008143">
    <property type="component" value="Chromosome 2"/>
</dbReference>
<dbReference type="Bgee" id="ENSXETG00000007638">
    <property type="expression patterns" value="Expressed in egg cell and 14 other cell types or tissues"/>
</dbReference>
<dbReference type="GO" id="GO:0005829">
    <property type="term" value="C:cytosol"/>
    <property type="evidence" value="ECO:0007669"/>
    <property type="project" value="UniProtKB-SubCell"/>
</dbReference>
<dbReference type="GO" id="GO:0031902">
    <property type="term" value="C:late endosome membrane"/>
    <property type="evidence" value="ECO:0007669"/>
    <property type="project" value="UniProtKB-SubCell"/>
</dbReference>
<dbReference type="GO" id="GO:0015031">
    <property type="term" value="P:protein transport"/>
    <property type="evidence" value="ECO:0007669"/>
    <property type="project" value="UniProtKB-KW"/>
</dbReference>
<dbReference type="GO" id="GO:0007034">
    <property type="term" value="P:vacuolar transport"/>
    <property type="evidence" value="ECO:0007669"/>
    <property type="project" value="InterPro"/>
</dbReference>
<dbReference type="Gene3D" id="6.10.140.1230">
    <property type="match status" value="1"/>
</dbReference>
<dbReference type="InterPro" id="IPR005024">
    <property type="entry name" value="Snf7_fam"/>
</dbReference>
<dbReference type="PANTHER" id="PTHR10476">
    <property type="entry name" value="CHARGED MULTIVESICULAR BODY PROTEIN"/>
    <property type="match status" value="1"/>
</dbReference>
<dbReference type="Pfam" id="PF03357">
    <property type="entry name" value="Snf7"/>
    <property type="match status" value="1"/>
</dbReference>
<gene>
    <name type="primary">chmp2b</name>
</gene>
<proteinExistence type="evidence at transcript level"/>
<protein>
    <recommendedName>
        <fullName>Charged multivesicular body protein 2b</fullName>
    </recommendedName>
    <alternativeName>
        <fullName>Chromatin-modifying protein 2b</fullName>
        <shortName>CHMP2b</shortName>
    </alternativeName>
</protein>
<organism>
    <name type="scientific">Xenopus tropicalis</name>
    <name type="common">Western clawed frog</name>
    <name type="synonym">Silurana tropicalis</name>
    <dbReference type="NCBI Taxonomy" id="8364"/>
    <lineage>
        <taxon>Eukaryota</taxon>
        <taxon>Metazoa</taxon>
        <taxon>Chordata</taxon>
        <taxon>Craniata</taxon>
        <taxon>Vertebrata</taxon>
        <taxon>Euteleostomi</taxon>
        <taxon>Amphibia</taxon>
        <taxon>Batrachia</taxon>
        <taxon>Anura</taxon>
        <taxon>Pipoidea</taxon>
        <taxon>Pipidae</taxon>
        <taxon>Xenopodinae</taxon>
        <taxon>Xenopus</taxon>
        <taxon>Silurana</taxon>
    </lineage>
</organism>
<keyword id="KW-0175">Coiled coil</keyword>
<keyword id="KW-0963">Cytoplasm</keyword>
<keyword id="KW-0967">Endosome</keyword>
<keyword id="KW-0472">Membrane</keyword>
<keyword id="KW-0653">Protein transport</keyword>
<keyword id="KW-1185">Reference proteome</keyword>
<keyword id="KW-0813">Transport</keyword>
<name>CHM2B_XENTR</name>
<comment type="function">
    <text evidence="1">Probable core component of the endosomal sorting required for transport complex III (ESCRT-III) which is involved in multivesicular bodies (MVBs) formation and sorting of endosomal cargo proteins into MVBs. MVBs contain intraluminal vesicles (ILVs) that are generated by invagination and scission from the limiting membrane of the endosome and mostly are delivered to lysosomes enabling degradation of membrane proteins, such as stimulated growth factor receptors, lysosomal enzymes and lipids (By similarity).</text>
</comment>
<comment type="subunit">
    <text evidence="1">Probable core component of the endosomal sorting required for transport complex III (ESCRT-III). ESCRT-III components are thought to multimerize to form a flat lattice on the perimeter membrane of the endosome (By similarity).</text>
</comment>
<comment type="subcellular location">
    <subcellularLocation>
        <location evidence="1">Cytoplasm</location>
        <location evidence="1">Cytosol</location>
    </subcellularLocation>
    <subcellularLocation>
        <location evidence="1">Late endosome membrane</location>
        <topology evidence="1">Peripheral membrane protein</topology>
    </subcellularLocation>
</comment>
<comment type="similarity">
    <text evidence="4">Belongs to the SNF7 family.</text>
</comment>
<sequence>MASLFKKKTVDDIIREQNKELRGTQRAITRDRAALEKQEKQLEMEIKKMAKAGNKDACRVLAKQLVQLRKQKTRTYAVSSKVTSMSTQTKVMSSQMKMAGAMSTTAKTMQAVNKKMDPQKTLQTMQNFQKENMKMEMTEEMINDTLDDIFDASDDEEESQDIVNQVLDEIGIEISGKMAKAPSAAKGLPSTSASKSSGISDEEIERQLKALGVD</sequence>
<evidence type="ECO:0000250" key="1"/>
<evidence type="ECO:0000255" key="2"/>
<evidence type="ECO:0000256" key="3">
    <source>
        <dbReference type="SAM" id="MobiDB-lite"/>
    </source>
</evidence>
<evidence type="ECO:0000305" key="4"/>
<reference key="1">
    <citation type="submission" date="2004-03" db="EMBL/GenBank/DDBJ databases">
        <authorList>
            <consortium name="NIH - Xenopus Gene Collection (XGC) project"/>
        </authorList>
    </citation>
    <scope>NUCLEOTIDE SEQUENCE [LARGE SCALE MRNA]</scope>
    <source>
        <tissue>Embryo</tissue>
    </source>
</reference>
<feature type="chain" id="PRO_0000211476" description="Charged multivesicular body protein 2b">
    <location>
        <begin position="1"/>
        <end position="214"/>
    </location>
</feature>
<feature type="region of interest" description="Disordered" evidence="3">
    <location>
        <begin position="178"/>
        <end position="203"/>
    </location>
</feature>
<feature type="coiled-coil region" evidence="2">
    <location>
        <begin position="16"/>
        <end position="55"/>
    </location>
</feature>
<feature type="short sequence motif" description="MIT-interacting motif">
    <location>
        <begin position="202"/>
        <end position="212"/>
    </location>
</feature>
<feature type="compositionally biased region" description="Polar residues" evidence="3">
    <location>
        <begin position="189"/>
        <end position="199"/>
    </location>
</feature>